<accession>P0DV52</accession>
<protein>
    <recommendedName>
        <fullName evidence="6">Gasdermin bGSDM</fullName>
        <shortName evidence="5">bGSDM</shortName>
    </recommendedName>
    <alternativeName>
        <fullName evidence="5">Bacterial gasdermin</fullName>
    </alternativeName>
    <component>
        <recommendedName>
            <fullName evidence="6">Gasdermin bGSDM, N-terminus</fullName>
        </recommendedName>
    </component>
</protein>
<reference key="1">
    <citation type="submission" date="2019-01" db="EMBL/GenBank/DDBJ databases">
        <title>Saline water microbial communities from Organic Lake, Antarctica - #987.</title>
        <authorList>
            <consortium name="DOE Joint Genome Institute"/>
        </authorList>
    </citation>
    <scope>NUCLEOTIDE SEQUENCE [LARGE SCALE GENOMIC DNA]</scope>
</reference>
<reference key="2">
    <citation type="journal article" date="2022" name="Science">
        <title>Bacterial gasdermins reveal an ancient mechanism of cell death.</title>
        <authorList>
            <person name="Johnson A.G."/>
            <person name="Wein T."/>
            <person name="Mayer M.L."/>
            <person name="Duncan-Lowey B."/>
            <person name="Yirmiya E."/>
            <person name="Oppenheimer-Shaanan Y."/>
            <person name="Amitai G."/>
            <person name="Sorek R."/>
            <person name="Kranzusch P.J."/>
        </authorList>
    </citation>
    <scope>IDENTIFICATION</scope>
    <scope>FUNCTION</scope>
    <scope>SUBUNIT</scope>
    <scope>SUBCELLULAR LOCATION</scope>
    <scope>MASS SPECTROMETRY</scope>
</reference>
<evidence type="ECO:0000250" key="1">
    <source>
        <dbReference type="UniProtKB" id="A0A0S2DNG5"/>
    </source>
</evidence>
<evidence type="ECO:0000250" key="2">
    <source>
        <dbReference type="UniProtKB" id="A0A2T4VDM4"/>
    </source>
</evidence>
<evidence type="ECO:0000250" key="3">
    <source>
        <dbReference type="UniProtKB" id="P0DV48"/>
    </source>
</evidence>
<evidence type="ECO:0000269" key="4">
    <source>
    </source>
</evidence>
<evidence type="ECO:0000303" key="5">
    <source>
    </source>
</evidence>
<evidence type="ECO:0000305" key="6"/>
<evidence type="ECO:0000305" key="7">
    <source>
    </source>
</evidence>
<comment type="function">
    <molecule>Gasdermin bGSDM</molecule>
    <text evidence="1 4">Precursor of a pore-forming protein involved in defense against bacteriophages (By similarity). Cleavage of this precursor by its dedicated protease releases the active moiety (gasdermin bGSDM, N-terminus) which inserts into membranes, forming pores and triggering cell death (PubMed:35025633). Expression of bGSDM and the neighboring protease gene (Ga0307981_100051430) is highly toxic in E.coli (PubMed:35025633).</text>
</comment>
<comment type="function">
    <molecule>Gasdermin bGSDM, N-terminus</molecule>
    <text evidence="4">Pore-forming protein that causes membrane permeabilization via a pyroptosis-like activity. This is the active form which makes ring-like pores with an interior pore diameter of 130-190 Angstroms, when integrated in liposomes.</text>
</comment>
<comment type="activity regulation">
    <molecule>Gasdermin bGSDM</molecule>
    <text evidence="7">The full-length protein before cleavage is inactive: intramolecular interactions between the N-terminal domain and the C-terminal region mediate autoinhibition. The pyroptosis-like-inducing activity is carried by the released N-terminal domain (Gasdermin bGSDM, N-terminus).</text>
</comment>
<comment type="subunit">
    <molecule>Gasdermin bGSDM</molecule>
    <text evidence="3">Monomer.</text>
</comment>
<comment type="subunit">
    <molecule>Gasdermin bGSDM, N-terminus</molecule>
    <text evidence="4">Forms large, homooligomeric ring-shaped pores when inserted in membranes.</text>
</comment>
<comment type="subcellular location">
    <molecule>Gasdermin bGSDM</molecule>
    <subcellularLocation>
        <location evidence="7">Cytoplasm</location>
    </subcellularLocation>
</comment>
<comment type="subcellular location">
    <molecule>Gasdermin bGSDM, N-terminus</molecule>
    <subcellularLocation>
        <location evidence="4">Cell membrane</location>
        <topology evidence="7">Multi-pass membrane protein</topology>
    </subcellularLocation>
    <text evidence="4">Upon proteolysis the protein forms membrane-associated puncta.</text>
</comment>
<comment type="domain">
    <text evidence="3">The N-terminus has marked structural similarity to the mammalian gasdermin N-terminal domain. The C-terminal region wraps around the twisted beta sheet core, probably stabilizing the inactive state.</text>
</comment>
<comment type="domain">
    <text evidence="2">The beta-stranded transmembrane 'fingers' of the active protein form by local refolding of several alpha helices found only in the inactive state.</text>
</comment>
<comment type="mass spectrometry">
    <text>Gasdermin bGSDM, N-terminus.</text>
</comment>
<comment type="miscellaneous">
    <text evidence="5">Might be a Bacteriodetes scaffold.</text>
</comment>
<comment type="similarity">
    <text evidence="4">Belongs to the bacterial gasdermin family.</text>
</comment>
<organism>
    <name type="scientific">Unknown prokaryotic organism</name>
    <dbReference type="NCBI Taxonomy" id="2725"/>
    <lineage>
        <taxon>Bacteria</taxon>
        <taxon>environmental samples</taxon>
    </lineage>
</organism>
<gene>
    <name evidence="5" type="ORF">Ga0307981_100051429</name>
</gene>
<name>GSDM_UNKP</name>
<proteinExistence type="evidence at protein level"/>
<sequence>MIKYLQSHLEEQGYLFVTLPKPDLAPLQLLTEYKGHLEEYDGSLLDLFEPDGSPFPIRDRQLPNFSGQQLLQTDWSAGADLLHGLFKLFQQKEDKLKASLSGMKGLVLSFAYENIEEERVSEQALDNFLAGAMPKKEGFQRSVERLQDGELYVLTSVMRSNQFTVTIDCQREDQGKLEAAVAEIVDAHASIERKQSNSFSLQTEGEQAFVFACRAAQVLYNKKQWFQFWKKDKDGFRIEKREGMVVRGEEDFSVQPLQAPSGLLKL</sequence>
<feature type="chain" id="PRO_0000455574" description="Gasdermin bGSDM">
    <location>
        <begin position="1"/>
        <end position="266"/>
    </location>
</feature>
<feature type="chain" id="PRO_0000455575" description="Gasdermin bGSDM, N-terminus" evidence="4">
    <location>
        <begin position="1"/>
        <end position="247"/>
    </location>
</feature>
<feature type="transmembrane region" description="Beta stranded" evidence="2">
    <location>
        <begin position="65"/>
        <end position="81"/>
    </location>
</feature>
<feature type="transmembrane region" description="Beta stranded" evidence="2">
    <location>
        <begin position="93"/>
        <end position="113"/>
    </location>
</feature>
<feature type="transmembrane region" description="Beta stranded" evidence="2">
    <location>
        <begin position="162"/>
        <end position="181"/>
    </location>
</feature>
<feature type="transmembrane region" description="Beta stranded" evidence="2">
    <location>
        <begin position="187"/>
        <end position="203"/>
    </location>
</feature>
<feature type="region of interest" description="C-terminal region" evidence="7">
    <location>
        <begin position="248"/>
        <end position="266"/>
    </location>
</feature>
<feature type="site" description="Cleavage; by protease Ga0307981_100051430" evidence="4">
    <location>
        <begin position="247"/>
        <end position="248"/>
    </location>
</feature>
<dbReference type="SMR" id="P0DV52"/>
<dbReference type="GO" id="GO:0005737">
    <property type="term" value="C:cytoplasm"/>
    <property type="evidence" value="ECO:0007669"/>
    <property type="project" value="UniProtKB-SubCell"/>
</dbReference>
<dbReference type="GO" id="GO:0005886">
    <property type="term" value="C:plasma membrane"/>
    <property type="evidence" value="ECO:0007669"/>
    <property type="project" value="UniProtKB-SubCell"/>
</dbReference>
<dbReference type="GO" id="GO:0051607">
    <property type="term" value="P:defense response to virus"/>
    <property type="evidence" value="ECO:0007669"/>
    <property type="project" value="UniProtKB-KW"/>
</dbReference>
<keyword id="KW-0051">Antiviral defense</keyword>
<keyword id="KW-1003">Cell membrane</keyword>
<keyword id="KW-0963">Cytoplasm</keyword>
<keyword id="KW-0472">Membrane</keyword>
<keyword id="KW-0812">Transmembrane</keyword>
<keyword id="KW-1134">Transmembrane beta strand</keyword>